<name>MOC2B_ASPFU</name>
<reference key="1">
    <citation type="journal article" date="2005" name="Nature">
        <title>Genomic sequence of the pathogenic and allergenic filamentous fungus Aspergillus fumigatus.</title>
        <authorList>
            <person name="Nierman W.C."/>
            <person name="Pain A."/>
            <person name="Anderson M.J."/>
            <person name="Wortman J.R."/>
            <person name="Kim H.S."/>
            <person name="Arroyo J."/>
            <person name="Berriman M."/>
            <person name="Abe K."/>
            <person name="Archer D.B."/>
            <person name="Bermejo C."/>
            <person name="Bennett J.W."/>
            <person name="Bowyer P."/>
            <person name="Chen D."/>
            <person name="Collins M."/>
            <person name="Coulsen R."/>
            <person name="Davies R."/>
            <person name="Dyer P.S."/>
            <person name="Farman M.L."/>
            <person name="Fedorova N."/>
            <person name="Fedorova N.D."/>
            <person name="Feldblyum T.V."/>
            <person name="Fischer R."/>
            <person name="Fosker N."/>
            <person name="Fraser A."/>
            <person name="Garcia J.L."/>
            <person name="Garcia M.J."/>
            <person name="Goble A."/>
            <person name="Goldman G.H."/>
            <person name="Gomi K."/>
            <person name="Griffith-Jones S."/>
            <person name="Gwilliam R."/>
            <person name="Haas B.J."/>
            <person name="Haas H."/>
            <person name="Harris D.E."/>
            <person name="Horiuchi H."/>
            <person name="Huang J."/>
            <person name="Humphray S."/>
            <person name="Jimenez J."/>
            <person name="Keller N."/>
            <person name="Khouri H."/>
            <person name="Kitamoto K."/>
            <person name="Kobayashi T."/>
            <person name="Konzack S."/>
            <person name="Kulkarni R."/>
            <person name="Kumagai T."/>
            <person name="Lafton A."/>
            <person name="Latge J.-P."/>
            <person name="Li W."/>
            <person name="Lord A."/>
            <person name="Lu C."/>
            <person name="Majoros W.H."/>
            <person name="May G.S."/>
            <person name="Miller B.L."/>
            <person name="Mohamoud Y."/>
            <person name="Molina M."/>
            <person name="Monod M."/>
            <person name="Mouyna I."/>
            <person name="Mulligan S."/>
            <person name="Murphy L.D."/>
            <person name="O'Neil S."/>
            <person name="Paulsen I."/>
            <person name="Penalva M.A."/>
            <person name="Pertea M."/>
            <person name="Price C."/>
            <person name="Pritchard B.L."/>
            <person name="Quail M.A."/>
            <person name="Rabbinowitsch E."/>
            <person name="Rawlins N."/>
            <person name="Rajandream M.A."/>
            <person name="Reichard U."/>
            <person name="Renauld H."/>
            <person name="Robson G.D."/>
            <person name="Rodriguez de Cordoba S."/>
            <person name="Rodriguez-Pena J.M."/>
            <person name="Ronning C.M."/>
            <person name="Rutter S."/>
            <person name="Salzberg S.L."/>
            <person name="Sanchez M."/>
            <person name="Sanchez-Ferrero J.C."/>
            <person name="Saunders D."/>
            <person name="Seeger K."/>
            <person name="Squares R."/>
            <person name="Squares S."/>
            <person name="Takeuchi M."/>
            <person name="Tekaia F."/>
            <person name="Turner G."/>
            <person name="Vazquez de Aldana C.R."/>
            <person name="Weidman J."/>
            <person name="White O."/>
            <person name="Woodward J.R."/>
            <person name="Yu J.-H."/>
            <person name="Fraser C.M."/>
            <person name="Galagan J.E."/>
            <person name="Asai K."/>
            <person name="Machida M."/>
            <person name="Hall N."/>
            <person name="Barrell B.G."/>
            <person name="Denning D.W."/>
        </authorList>
    </citation>
    <scope>NUCLEOTIDE SEQUENCE [LARGE SCALE GENOMIC DNA]</scope>
    <source>
        <strain>ATCC MYA-4609 / CBS 101355 / FGSC A1100 / Af293</strain>
    </source>
</reference>
<proteinExistence type="inferred from homology"/>
<dbReference type="EC" id="2.8.1.12" evidence="1"/>
<dbReference type="EMBL" id="AAHF01000002">
    <property type="protein sequence ID" value="EAL92834.1"/>
    <property type="molecule type" value="Genomic_DNA"/>
</dbReference>
<dbReference type="RefSeq" id="XP_754872.1">
    <property type="nucleotide sequence ID" value="XM_749779.1"/>
</dbReference>
<dbReference type="SMR" id="Q4WWW9"/>
<dbReference type="STRING" id="330879.Q4WWW9"/>
<dbReference type="EnsemblFungi" id="EAL92834">
    <property type="protein sequence ID" value="EAL92834"/>
    <property type="gene ID" value="AFUA_3G07370"/>
</dbReference>
<dbReference type="GeneID" id="3512258"/>
<dbReference type="KEGG" id="afm:AFUA_3G07370"/>
<dbReference type="VEuPathDB" id="FungiDB:Afu3g07370"/>
<dbReference type="eggNOG" id="KOG3307">
    <property type="taxonomic scope" value="Eukaryota"/>
</dbReference>
<dbReference type="HOGENOM" id="CLU_089568_3_1_1"/>
<dbReference type="InParanoid" id="Q4WWW9"/>
<dbReference type="OMA" id="WKHQFFA"/>
<dbReference type="OrthoDB" id="5531344at2759"/>
<dbReference type="UniPathway" id="UPA00344"/>
<dbReference type="Proteomes" id="UP000002530">
    <property type="component" value="Chromosome 3"/>
</dbReference>
<dbReference type="GO" id="GO:0005829">
    <property type="term" value="C:cytosol"/>
    <property type="evidence" value="ECO:0000318"/>
    <property type="project" value="GO_Central"/>
</dbReference>
<dbReference type="GO" id="GO:1990140">
    <property type="term" value="C:molybdopterin synthase complex"/>
    <property type="evidence" value="ECO:0000250"/>
    <property type="project" value="UniProtKB"/>
</dbReference>
<dbReference type="GO" id="GO:0030366">
    <property type="term" value="F:molybdopterin synthase activity"/>
    <property type="evidence" value="ECO:0007669"/>
    <property type="project" value="UniProtKB-UniRule"/>
</dbReference>
<dbReference type="GO" id="GO:0006777">
    <property type="term" value="P:Mo-molybdopterin cofactor biosynthetic process"/>
    <property type="evidence" value="ECO:0000250"/>
    <property type="project" value="UniProtKB"/>
</dbReference>
<dbReference type="CDD" id="cd00756">
    <property type="entry name" value="MoaE"/>
    <property type="match status" value="1"/>
</dbReference>
<dbReference type="FunFam" id="3.90.1170.40:FF:000003">
    <property type="entry name" value="Molybdopterin converting factor subunit 2"/>
    <property type="match status" value="1"/>
</dbReference>
<dbReference type="Gene3D" id="3.90.1170.40">
    <property type="entry name" value="Molybdopterin biosynthesis MoaE subunit"/>
    <property type="match status" value="1"/>
</dbReference>
<dbReference type="HAMAP" id="MF_03052">
    <property type="entry name" value="MOC2B"/>
    <property type="match status" value="1"/>
</dbReference>
<dbReference type="InterPro" id="IPR036563">
    <property type="entry name" value="MoaE_sf"/>
</dbReference>
<dbReference type="InterPro" id="IPR028888">
    <property type="entry name" value="MOCS2B_euk"/>
</dbReference>
<dbReference type="InterPro" id="IPR003448">
    <property type="entry name" value="Mopterin_biosynth_MoaE"/>
</dbReference>
<dbReference type="PANTHER" id="PTHR23404">
    <property type="entry name" value="MOLYBDOPTERIN SYNTHASE RELATED"/>
    <property type="match status" value="1"/>
</dbReference>
<dbReference type="Pfam" id="PF02391">
    <property type="entry name" value="MoaE"/>
    <property type="match status" value="1"/>
</dbReference>
<dbReference type="SUPFAM" id="SSF54690">
    <property type="entry name" value="Molybdopterin synthase subunit MoaE"/>
    <property type="match status" value="1"/>
</dbReference>
<organism>
    <name type="scientific">Aspergillus fumigatus (strain ATCC MYA-4609 / CBS 101355 / FGSC A1100 / Af293)</name>
    <name type="common">Neosartorya fumigata</name>
    <dbReference type="NCBI Taxonomy" id="330879"/>
    <lineage>
        <taxon>Eukaryota</taxon>
        <taxon>Fungi</taxon>
        <taxon>Dikarya</taxon>
        <taxon>Ascomycota</taxon>
        <taxon>Pezizomycotina</taxon>
        <taxon>Eurotiomycetes</taxon>
        <taxon>Eurotiomycetidae</taxon>
        <taxon>Eurotiales</taxon>
        <taxon>Aspergillaceae</taxon>
        <taxon>Aspergillus</taxon>
        <taxon>Aspergillus subgen. Fumigati</taxon>
    </lineage>
</organism>
<feature type="chain" id="PRO_0000369351" description="Molybdopterin synthase catalytic subunit">
    <location>
        <begin position="1"/>
        <end position="188"/>
    </location>
</feature>
<feature type="region of interest" description="Disordered" evidence="2">
    <location>
        <begin position="1"/>
        <end position="23"/>
    </location>
</feature>
<feature type="compositionally biased region" description="Low complexity" evidence="2">
    <location>
        <begin position="1"/>
        <end position="14"/>
    </location>
</feature>
<feature type="binding site" evidence="1">
    <location>
        <begin position="134"/>
        <end position="135"/>
    </location>
    <ligand>
        <name>substrate</name>
    </ligand>
</feature>
<feature type="binding site" evidence="1">
    <location>
        <position position="150"/>
    </location>
    <ligand>
        <name>substrate</name>
    </ligand>
</feature>
<feature type="binding site" evidence="1">
    <location>
        <begin position="157"/>
        <end position="159"/>
    </location>
    <ligand>
        <name>substrate</name>
    </ligand>
</feature>
<sequence length="188" mass="20615">MATQPPQDQTSTTPSLPPHLDPTTYPRILTSATHNIHLELTYSTLNPTVALEHTSSPAAGANVLFLGTTRDTFEGRAVSQLSYTSYPPLALKSLMSIATRAVEKFDLKGVYIAHRLGVVPISEASIVVAVSAGHRGMAWKAAEEVLEEVKEKVEIWKREEFVDGGMEWRENRERDAEGRILSSTEGGK</sequence>
<protein>
    <recommendedName>
        <fullName evidence="1">Molybdopterin synthase catalytic subunit</fullName>
        <ecNumber evidence="1">2.8.1.12</ecNumber>
    </recommendedName>
    <alternativeName>
        <fullName evidence="1">Common component for nitrate reductase and xanthine dehydrogenase protein H</fullName>
    </alternativeName>
    <alternativeName>
        <fullName evidence="1">Molybdenum cofactor synthesis protein 2 large subunit</fullName>
    </alternativeName>
    <alternativeName>
        <fullName evidence="1">Molybdenum cofactor synthesis protein 2B</fullName>
        <shortName evidence="1">MOCS2B</shortName>
    </alternativeName>
</protein>
<accession>Q4WWW9</accession>
<gene>
    <name evidence="1" type="primary">cnxH</name>
    <name type="ORF">AFUA_3G07370</name>
</gene>
<keyword id="KW-0963">Cytoplasm</keyword>
<keyword id="KW-0501">Molybdenum cofactor biosynthesis</keyword>
<keyword id="KW-1185">Reference proteome</keyword>
<keyword id="KW-0808">Transferase</keyword>
<evidence type="ECO:0000255" key="1">
    <source>
        <dbReference type="HAMAP-Rule" id="MF_03052"/>
    </source>
</evidence>
<evidence type="ECO:0000256" key="2">
    <source>
        <dbReference type="SAM" id="MobiDB-lite"/>
    </source>
</evidence>
<comment type="function">
    <text evidence="1">Catalytic subunit of the molybdopterin synthase complex, a complex that catalyzes the conversion of precursor Z into molybdopterin. Acts by mediating the incorporation of 2 sulfur atoms from thiocarboxylated MOCS2A into precursor Z to generate a dithiolene group.</text>
</comment>
<comment type="catalytic activity">
    <reaction evidence="1">
        <text>2 [molybdopterin-synthase sulfur-carrier protein]-C-terminal-Gly-aminoethanethioate + cyclic pyranopterin phosphate + H2O = molybdopterin + 2 [molybdopterin-synthase sulfur-carrier protein]-C-terminal Gly-Gly + 2 H(+)</text>
        <dbReference type="Rhea" id="RHEA:26333"/>
        <dbReference type="Rhea" id="RHEA-COMP:12202"/>
        <dbReference type="Rhea" id="RHEA-COMP:19907"/>
        <dbReference type="ChEBI" id="CHEBI:15377"/>
        <dbReference type="ChEBI" id="CHEBI:15378"/>
        <dbReference type="ChEBI" id="CHEBI:58698"/>
        <dbReference type="ChEBI" id="CHEBI:59648"/>
        <dbReference type="ChEBI" id="CHEBI:90778"/>
        <dbReference type="ChEBI" id="CHEBI:232372"/>
        <dbReference type="EC" id="2.8.1.12"/>
    </reaction>
</comment>
<comment type="pathway">
    <text evidence="1">Cofactor biosynthesis; molybdopterin biosynthesis.</text>
</comment>
<comment type="subunit">
    <text evidence="1">Heterotetramer; composed of 2 small (MOCS2A) and 2 large (MOCS2B) subunits.</text>
</comment>
<comment type="subcellular location">
    <subcellularLocation>
        <location evidence="1">Cytoplasm</location>
    </subcellularLocation>
</comment>
<comment type="similarity">
    <text evidence="1">Belongs to the MoaE family. MOCS2B subfamily.</text>
</comment>